<feature type="chain" id="PRO_0000290696" description="Undecaprenyl-diphosphatase">
    <location>
        <begin position="1"/>
        <end position="267"/>
    </location>
</feature>
<feature type="transmembrane region" description="Helical" evidence="1">
    <location>
        <begin position="4"/>
        <end position="24"/>
    </location>
</feature>
<feature type="transmembrane region" description="Helical" evidence="1">
    <location>
        <begin position="41"/>
        <end position="61"/>
    </location>
</feature>
<feature type="transmembrane region" description="Helical" evidence="1">
    <location>
        <begin position="69"/>
        <end position="89"/>
    </location>
</feature>
<feature type="transmembrane region" description="Helical" evidence="1">
    <location>
        <begin position="96"/>
        <end position="116"/>
    </location>
</feature>
<feature type="transmembrane region" description="Helical" evidence="1">
    <location>
        <begin position="173"/>
        <end position="193"/>
    </location>
</feature>
<feature type="transmembrane region" description="Helical" evidence="1">
    <location>
        <begin position="207"/>
        <end position="227"/>
    </location>
</feature>
<feature type="transmembrane region" description="Helical" evidence="1">
    <location>
        <begin position="239"/>
        <end position="259"/>
    </location>
</feature>
<protein>
    <recommendedName>
        <fullName evidence="1">Undecaprenyl-diphosphatase</fullName>
        <ecNumber evidence="1">3.6.1.27</ecNumber>
    </recommendedName>
    <alternativeName>
        <fullName evidence="1">Bacitracin resistance protein</fullName>
    </alternativeName>
    <alternativeName>
        <fullName evidence="1">Undecaprenyl pyrophosphate phosphatase</fullName>
    </alternativeName>
</protein>
<dbReference type="EC" id="3.6.1.27" evidence="1"/>
<dbReference type="EMBL" id="CP000538">
    <property type="protein sequence ID" value="EAQ73233.1"/>
    <property type="molecule type" value="Genomic_DNA"/>
</dbReference>
<dbReference type="RefSeq" id="WP_002854708.1">
    <property type="nucleotide sequence ID" value="NC_008787.1"/>
</dbReference>
<dbReference type="SMR" id="A1VXT4"/>
<dbReference type="KEGG" id="cjj:CJJ81176_0237"/>
<dbReference type="eggNOG" id="COG1968">
    <property type="taxonomic scope" value="Bacteria"/>
</dbReference>
<dbReference type="HOGENOM" id="CLU_060296_2_0_7"/>
<dbReference type="Proteomes" id="UP000000646">
    <property type="component" value="Chromosome"/>
</dbReference>
<dbReference type="GO" id="GO:0005886">
    <property type="term" value="C:plasma membrane"/>
    <property type="evidence" value="ECO:0007669"/>
    <property type="project" value="UniProtKB-SubCell"/>
</dbReference>
<dbReference type="GO" id="GO:0050380">
    <property type="term" value="F:undecaprenyl-diphosphatase activity"/>
    <property type="evidence" value="ECO:0007669"/>
    <property type="project" value="UniProtKB-UniRule"/>
</dbReference>
<dbReference type="GO" id="GO:0071555">
    <property type="term" value="P:cell wall organization"/>
    <property type="evidence" value="ECO:0007669"/>
    <property type="project" value="UniProtKB-KW"/>
</dbReference>
<dbReference type="GO" id="GO:0009252">
    <property type="term" value="P:peptidoglycan biosynthetic process"/>
    <property type="evidence" value="ECO:0007669"/>
    <property type="project" value="UniProtKB-KW"/>
</dbReference>
<dbReference type="GO" id="GO:0008360">
    <property type="term" value="P:regulation of cell shape"/>
    <property type="evidence" value="ECO:0007669"/>
    <property type="project" value="UniProtKB-KW"/>
</dbReference>
<dbReference type="GO" id="GO:0046677">
    <property type="term" value="P:response to antibiotic"/>
    <property type="evidence" value="ECO:0007669"/>
    <property type="project" value="UniProtKB-UniRule"/>
</dbReference>
<dbReference type="HAMAP" id="MF_01006">
    <property type="entry name" value="Undec_diphosphatase"/>
    <property type="match status" value="1"/>
</dbReference>
<dbReference type="InterPro" id="IPR003824">
    <property type="entry name" value="UppP"/>
</dbReference>
<dbReference type="NCBIfam" id="NF001390">
    <property type="entry name" value="PRK00281.1-4"/>
    <property type="match status" value="1"/>
</dbReference>
<dbReference type="NCBIfam" id="TIGR00753">
    <property type="entry name" value="undec_PP_bacA"/>
    <property type="match status" value="1"/>
</dbReference>
<dbReference type="PANTHER" id="PTHR30622">
    <property type="entry name" value="UNDECAPRENYL-DIPHOSPHATASE"/>
    <property type="match status" value="1"/>
</dbReference>
<dbReference type="PANTHER" id="PTHR30622:SF3">
    <property type="entry name" value="UNDECAPRENYL-DIPHOSPHATASE"/>
    <property type="match status" value="1"/>
</dbReference>
<dbReference type="Pfam" id="PF02673">
    <property type="entry name" value="BacA"/>
    <property type="match status" value="1"/>
</dbReference>
<keyword id="KW-0046">Antibiotic resistance</keyword>
<keyword id="KW-0997">Cell inner membrane</keyword>
<keyword id="KW-1003">Cell membrane</keyword>
<keyword id="KW-0133">Cell shape</keyword>
<keyword id="KW-0961">Cell wall biogenesis/degradation</keyword>
<keyword id="KW-0378">Hydrolase</keyword>
<keyword id="KW-0472">Membrane</keyword>
<keyword id="KW-0573">Peptidoglycan synthesis</keyword>
<keyword id="KW-0812">Transmembrane</keyword>
<keyword id="KW-1133">Transmembrane helix</keyword>
<proteinExistence type="inferred from homology"/>
<sequence>MENLYALILGIIEGLTEFLPISSTGHMILGTTILGIDIDEFWKSFLIIIQLGSILAVIFVFWRKLFQGLDIWLKLAVGFFPTGVIGLFVAKYLNALFNGWVVVGMLIFGGVVFILIELAHKNKQYRINSLEEISFKQAFCIGIFQSLAMIPGTSRSGASIIGGLLLGFNRKVAAEFSFLLAIPTMIIATAYSIYKEPELLSNANSLIPLGIGFITAFIVAVLVIKFFLKFISKFDFIPFGIYRIILGFVFFYLYYSGILNAGSEFKL</sequence>
<evidence type="ECO:0000255" key="1">
    <source>
        <dbReference type="HAMAP-Rule" id="MF_01006"/>
    </source>
</evidence>
<name>UPPP_CAMJJ</name>
<accession>A1VXT4</accession>
<organism>
    <name type="scientific">Campylobacter jejuni subsp. jejuni serotype O:23/36 (strain 81-176)</name>
    <dbReference type="NCBI Taxonomy" id="354242"/>
    <lineage>
        <taxon>Bacteria</taxon>
        <taxon>Pseudomonadati</taxon>
        <taxon>Campylobacterota</taxon>
        <taxon>Epsilonproteobacteria</taxon>
        <taxon>Campylobacterales</taxon>
        <taxon>Campylobacteraceae</taxon>
        <taxon>Campylobacter</taxon>
    </lineage>
</organism>
<comment type="function">
    <text evidence="1">Catalyzes the dephosphorylation of undecaprenyl diphosphate (UPP). Confers resistance to bacitracin.</text>
</comment>
<comment type="catalytic activity">
    <reaction evidence="1">
        <text>di-trans,octa-cis-undecaprenyl diphosphate + H2O = di-trans,octa-cis-undecaprenyl phosphate + phosphate + H(+)</text>
        <dbReference type="Rhea" id="RHEA:28094"/>
        <dbReference type="ChEBI" id="CHEBI:15377"/>
        <dbReference type="ChEBI" id="CHEBI:15378"/>
        <dbReference type="ChEBI" id="CHEBI:43474"/>
        <dbReference type="ChEBI" id="CHEBI:58405"/>
        <dbReference type="ChEBI" id="CHEBI:60392"/>
        <dbReference type="EC" id="3.6.1.27"/>
    </reaction>
</comment>
<comment type="subcellular location">
    <subcellularLocation>
        <location evidence="1">Cell inner membrane</location>
        <topology evidence="1">Multi-pass membrane protein</topology>
    </subcellularLocation>
</comment>
<comment type="miscellaneous">
    <text>Bacitracin is thought to be involved in the inhibition of peptidoglycan synthesis by sequestering undecaprenyl diphosphate, thereby reducing the pool of lipid carrier available.</text>
</comment>
<comment type="similarity">
    <text evidence="1">Belongs to the UppP family.</text>
</comment>
<gene>
    <name evidence="1" type="primary">uppP</name>
    <name type="ordered locus">CJJ81176_0237</name>
</gene>
<reference key="1">
    <citation type="submission" date="2006-12" db="EMBL/GenBank/DDBJ databases">
        <authorList>
            <person name="Fouts D.E."/>
            <person name="Nelson K.E."/>
            <person name="Sebastian Y."/>
        </authorList>
    </citation>
    <scope>NUCLEOTIDE SEQUENCE [LARGE SCALE GENOMIC DNA]</scope>
    <source>
        <strain>81-176</strain>
    </source>
</reference>